<reference key="1">
    <citation type="journal article" date="2011" name="J. Bacteriol.">
        <title>Complete genome sequence of the plant growth-promoting endophyte Burkholderia phytofirmans strain PsJN.</title>
        <authorList>
            <person name="Weilharter A."/>
            <person name="Mitter B."/>
            <person name="Shin M.V."/>
            <person name="Chain P.S."/>
            <person name="Nowak J."/>
            <person name="Sessitsch A."/>
        </authorList>
    </citation>
    <scope>NUCLEOTIDE SEQUENCE [LARGE SCALE GENOMIC DNA]</scope>
    <source>
        <strain>DSM 17436 / LMG 22146 / PsJN</strain>
    </source>
</reference>
<accession>B2TG13</accession>
<dbReference type="EC" id="3.5.1.2" evidence="1"/>
<dbReference type="EMBL" id="CP001053">
    <property type="protein sequence ID" value="ACD19887.1"/>
    <property type="molecule type" value="Genomic_DNA"/>
</dbReference>
<dbReference type="RefSeq" id="WP_012427395.1">
    <property type="nucleotide sequence ID" value="NC_010676.1"/>
</dbReference>
<dbReference type="SMR" id="B2TG13"/>
<dbReference type="STRING" id="398527.Bphyt_5532"/>
<dbReference type="KEGG" id="bpy:Bphyt_5532"/>
<dbReference type="eggNOG" id="COG2066">
    <property type="taxonomic scope" value="Bacteria"/>
</dbReference>
<dbReference type="HOGENOM" id="CLU_027932_1_1_4"/>
<dbReference type="OrthoDB" id="9788822at2"/>
<dbReference type="Proteomes" id="UP000001739">
    <property type="component" value="Chromosome 2"/>
</dbReference>
<dbReference type="GO" id="GO:0004359">
    <property type="term" value="F:glutaminase activity"/>
    <property type="evidence" value="ECO:0007669"/>
    <property type="project" value="UniProtKB-UniRule"/>
</dbReference>
<dbReference type="GO" id="GO:0006537">
    <property type="term" value="P:glutamate biosynthetic process"/>
    <property type="evidence" value="ECO:0007669"/>
    <property type="project" value="TreeGrafter"/>
</dbReference>
<dbReference type="GO" id="GO:0006543">
    <property type="term" value="P:glutamine catabolic process"/>
    <property type="evidence" value="ECO:0007669"/>
    <property type="project" value="TreeGrafter"/>
</dbReference>
<dbReference type="FunFam" id="3.40.710.10:FF:000005">
    <property type="entry name" value="Glutaminase"/>
    <property type="match status" value="1"/>
</dbReference>
<dbReference type="Gene3D" id="3.40.710.10">
    <property type="entry name" value="DD-peptidase/beta-lactamase superfamily"/>
    <property type="match status" value="1"/>
</dbReference>
<dbReference type="HAMAP" id="MF_00313">
    <property type="entry name" value="Glutaminase"/>
    <property type="match status" value="1"/>
</dbReference>
<dbReference type="InterPro" id="IPR012338">
    <property type="entry name" value="Beta-lactam/transpept-like"/>
</dbReference>
<dbReference type="InterPro" id="IPR015868">
    <property type="entry name" value="Glutaminase"/>
</dbReference>
<dbReference type="NCBIfam" id="TIGR03814">
    <property type="entry name" value="Gln_ase"/>
    <property type="match status" value="1"/>
</dbReference>
<dbReference type="NCBIfam" id="NF002132">
    <property type="entry name" value="PRK00971.1-1"/>
    <property type="match status" value="1"/>
</dbReference>
<dbReference type="NCBIfam" id="NF002133">
    <property type="entry name" value="PRK00971.1-2"/>
    <property type="match status" value="1"/>
</dbReference>
<dbReference type="PANTHER" id="PTHR12544">
    <property type="entry name" value="GLUTAMINASE"/>
    <property type="match status" value="1"/>
</dbReference>
<dbReference type="PANTHER" id="PTHR12544:SF29">
    <property type="entry name" value="GLUTAMINASE"/>
    <property type="match status" value="1"/>
</dbReference>
<dbReference type="Pfam" id="PF04960">
    <property type="entry name" value="Glutaminase"/>
    <property type="match status" value="1"/>
</dbReference>
<dbReference type="SUPFAM" id="SSF56601">
    <property type="entry name" value="beta-lactamase/transpeptidase-like"/>
    <property type="match status" value="1"/>
</dbReference>
<gene>
    <name evidence="1" type="primary">glsA</name>
    <name type="ordered locus">Bphyt_5532</name>
</gene>
<name>GLSA_PARPJ</name>
<comment type="catalytic activity">
    <reaction evidence="1">
        <text>L-glutamine + H2O = L-glutamate + NH4(+)</text>
        <dbReference type="Rhea" id="RHEA:15889"/>
        <dbReference type="ChEBI" id="CHEBI:15377"/>
        <dbReference type="ChEBI" id="CHEBI:28938"/>
        <dbReference type="ChEBI" id="CHEBI:29985"/>
        <dbReference type="ChEBI" id="CHEBI:58359"/>
        <dbReference type="EC" id="3.5.1.2"/>
    </reaction>
</comment>
<comment type="subunit">
    <text evidence="1">Homotetramer.</text>
</comment>
<comment type="similarity">
    <text evidence="1">Belongs to the glutaminase family.</text>
</comment>
<protein>
    <recommendedName>
        <fullName evidence="1">Glutaminase</fullName>
        <ecNumber evidence="1">3.5.1.2</ecNumber>
    </recommendedName>
</protein>
<proteinExistence type="inferred from homology"/>
<sequence>MNYASILEQIRGDLQPFLGTGKVADYIPELATVPADSFGMAIVTASGEIFRTGEADTRFSIQSISKLFACTLAFQLLGDALWERVGREPSGTAFNSLVQLESERGKPRNPFINAGALVVTDVLCRRFVQAETALVEFMRRLTGETSIDYDSRIAQSELQHAHRNRAMAHFMASFGNMEMPPEVVVDAYCRQCAISMSCVELAKAALFLTNHGVAPVTGERILDTSSAKRLSALMLTCGTYDAAGDFVYRVGLPAKSGVGGGIVAVLPGEMAACVWSPALDSNGNSAAGVLALEWLTTYTGQSIF</sequence>
<organism>
    <name type="scientific">Paraburkholderia phytofirmans (strain DSM 17436 / LMG 22146 / PsJN)</name>
    <name type="common">Burkholderia phytofirmans</name>
    <dbReference type="NCBI Taxonomy" id="398527"/>
    <lineage>
        <taxon>Bacteria</taxon>
        <taxon>Pseudomonadati</taxon>
        <taxon>Pseudomonadota</taxon>
        <taxon>Betaproteobacteria</taxon>
        <taxon>Burkholderiales</taxon>
        <taxon>Burkholderiaceae</taxon>
        <taxon>Paraburkholderia</taxon>
    </lineage>
</organism>
<feature type="chain" id="PRO_1000115694" description="Glutaminase">
    <location>
        <begin position="1"/>
        <end position="304"/>
    </location>
</feature>
<feature type="binding site" evidence="1">
    <location>
        <position position="63"/>
    </location>
    <ligand>
        <name>substrate</name>
    </ligand>
</feature>
<feature type="binding site" evidence="1">
    <location>
        <position position="113"/>
    </location>
    <ligand>
        <name>substrate</name>
    </ligand>
</feature>
<feature type="binding site" evidence="1">
    <location>
        <position position="157"/>
    </location>
    <ligand>
        <name>substrate</name>
    </ligand>
</feature>
<feature type="binding site" evidence="1">
    <location>
        <position position="164"/>
    </location>
    <ligand>
        <name>substrate</name>
    </ligand>
</feature>
<feature type="binding site" evidence="1">
    <location>
        <position position="188"/>
    </location>
    <ligand>
        <name>substrate</name>
    </ligand>
</feature>
<feature type="binding site" evidence="1">
    <location>
        <position position="240"/>
    </location>
    <ligand>
        <name>substrate</name>
    </ligand>
</feature>
<feature type="binding site" evidence="1">
    <location>
        <position position="258"/>
    </location>
    <ligand>
        <name>substrate</name>
    </ligand>
</feature>
<evidence type="ECO:0000255" key="1">
    <source>
        <dbReference type="HAMAP-Rule" id="MF_00313"/>
    </source>
</evidence>
<keyword id="KW-0378">Hydrolase</keyword>